<dbReference type="EC" id="1.1.1.86" evidence="1"/>
<dbReference type="EMBL" id="CP000934">
    <property type="protein sequence ID" value="ACE83224.1"/>
    <property type="molecule type" value="Genomic_DNA"/>
</dbReference>
<dbReference type="RefSeq" id="WP_012486344.1">
    <property type="nucleotide sequence ID" value="NC_010995.1"/>
</dbReference>
<dbReference type="SMR" id="B3PK17"/>
<dbReference type="STRING" id="498211.CJA_0668"/>
<dbReference type="KEGG" id="cja:CJA_0668"/>
<dbReference type="eggNOG" id="COG0059">
    <property type="taxonomic scope" value="Bacteria"/>
</dbReference>
<dbReference type="HOGENOM" id="CLU_033821_0_1_6"/>
<dbReference type="OrthoDB" id="9804088at2"/>
<dbReference type="UniPathway" id="UPA00047">
    <property type="reaction ID" value="UER00056"/>
</dbReference>
<dbReference type="UniPathway" id="UPA00049">
    <property type="reaction ID" value="UER00060"/>
</dbReference>
<dbReference type="Proteomes" id="UP000001036">
    <property type="component" value="Chromosome"/>
</dbReference>
<dbReference type="GO" id="GO:0005829">
    <property type="term" value="C:cytosol"/>
    <property type="evidence" value="ECO:0007669"/>
    <property type="project" value="TreeGrafter"/>
</dbReference>
<dbReference type="GO" id="GO:0004455">
    <property type="term" value="F:ketol-acid reductoisomerase activity"/>
    <property type="evidence" value="ECO:0007669"/>
    <property type="project" value="UniProtKB-UniRule"/>
</dbReference>
<dbReference type="GO" id="GO:0000287">
    <property type="term" value="F:magnesium ion binding"/>
    <property type="evidence" value="ECO:0007669"/>
    <property type="project" value="UniProtKB-UniRule"/>
</dbReference>
<dbReference type="GO" id="GO:0050661">
    <property type="term" value="F:NADP binding"/>
    <property type="evidence" value="ECO:0007669"/>
    <property type="project" value="InterPro"/>
</dbReference>
<dbReference type="GO" id="GO:0009097">
    <property type="term" value="P:isoleucine biosynthetic process"/>
    <property type="evidence" value="ECO:0007669"/>
    <property type="project" value="UniProtKB-UniRule"/>
</dbReference>
<dbReference type="GO" id="GO:0009099">
    <property type="term" value="P:L-valine biosynthetic process"/>
    <property type="evidence" value="ECO:0007669"/>
    <property type="project" value="UniProtKB-UniRule"/>
</dbReference>
<dbReference type="FunFam" id="3.40.50.720:FF:000023">
    <property type="entry name" value="Ketol-acid reductoisomerase (NADP(+))"/>
    <property type="match status" value="1"/>
</dbReference>
<dbReference type="Gene3D" id="6.10.240.10">
    <property type="match status" value="1"/>
</dbReference>
<dbReference type="Gene3D" id="3.40.50.720">
    <property type="entry name" value="NAD(P)-binding Rossmann-like Domain"/>
    <property type="match status" value="1"/>
</dbReference>
<dbReference type="HAMAP" id="MF_00435">
    <property type="entry name" value="IlvC"/>
    <property type="match status" value="1"/>
</dbReference>
<dbReference type="InterPro" id="IPR008927">
    <property type="entry name" value="6-PGluconate_DH-like_C_sf"/>
</dbReference>
<dbReference type="InterPro" id="IPR013023">
    <property type="entry name" value="KARI"/>
</dbReference>
<dbReference type="InterPro" id="IPR000506">
    <property type="entry name" value="KARI_C"/>
</dbReference>
<dbReference type="InterPro" id="IPR013116">
    <property type="entry name" value="KARI_N"/>
</dbReference>
<dbReference type="InterPro" id="IPR014359">
    <property type="entry name" value="KARI_prok"/>
</dbReference>
<dbReference type="InterPro" id="IPR036291">
    <property type="entry name" value="NAD(P)-bd_dom_sf"/>
</dbReference>
<dbReference type="NCBIfam" id="TIGR00465">
    <property type="entry name" value="ilvC"/>
    <property type="match status" value="1"/>
</dbReference>
<dbReference type="NCBIfam" id="NF004017">
    <property type="entry name" value="PRK05479.1"/>
    <property type="match status" value="1"/>
</dbReference>
<dbReference type="NCBIfam" id="NF009940">
    <property type="entry name" value="PRK13403.1"/>
    <property type="match status" value="1"/>
</dbReference>
<dbReference type="PANTHER" id="PTHR21371">
    <property type="entry name" value="KETOL-ACID REDUCTOISOMERASE, MITOCHONDRIAL"/>
    <property type="match status" value="1"/>
</dbReference>
<dbReference type="PANTHER" id="PTHR21371:SF1">
    <property type="entry name" value="KETOL-ACID REDUCTOISOMERASE, MITOCHONDRIAL"/>
    <property type="match status" value="1"/>
</dbReference>
<dbReference type="Pfam" id="PF01450">
    <property type="entry name" value="KARI_C"/>
    <property type="match status" value="1"/>
</dbReference>
<dbReference type="Pfam" id="PF07991">
    <property type="entry name" value="KARI_N"/>
    <property type="match status" value="1"/>
</dbReference>
<dbReference type="PIRSF" id="PIRSF000116">
    <property type="entry name" value="IlvC_gammaproteo"/>
    <property type="match status" value="1"/>
</dbReference>
<dbReference type="SUPFAM" id="SSF48179">
    <property type="entry name" value="6-phosphogluconate dehydrogenase C-terminal domain-like"/>
    <property type="match status" value="1"/>
</dbReference>
<dbReference type="SUPFAM" id="SSF51735">
    <property type="entry name" value="NAD(P)-binding Rossmann-fold domains"/>
    <property type="match status" value="1"/>
</dbReference>
<dbReference type="PROSITE" id="PS51851">
    <property type="entry name" value="KARI_C"/>
    <property type="match status" value="1"/>
</dbReference>
<dbReference type="PROSITE" id="PS51850">
    <property type="entry name" value="KARI_N"/>
    <property type="match status" value="1"/>
</dbReference>
<sequence length="338" mass="36646">MHVYYDKDCDLSIIQSKKVAIIGYGSQGHAHACNLKDSGVDVVVGLRPGSATVKKAEAHGLKVTDVKSAVASADLVMILTPDEFQSKLYKEEIEPNIKKGAALAFAHGFAIHYNQVVPRADLDVIMIAPKAPGHTVRSEFVKGGGIPDLIAIYQDASGKAKDLALSYASGVGGGRTGIIETTFKDETETDLFGEQAVLCGGCVELVKAGFETLVDAGYAPEMAYFECLHELKLIVDLMYEGGIANMNYSISNNAEYGEYVTGPRVINDESRKAMRQALKDIQDGEYAKKFVLEGQTNYASMTAYRRNNAAHQIEVVGAKLRAMMPWIQANKIVDKAKN</sequence>
<name>ILVC_CELJU</name>
<feature type="chain" id="PRO_1000190927" description="Ketol-acid reductoisomerase (NADP(+))">
    <location>
        <begin position="1"/>
        <end position="338"/>
    </location>
</feature>
<feature type="domain" description="KARI N-terminal Rossmann" evidence="2">
    <location>
        <begin position="1"/>
        <end position="181"/>
    </location>
</feature>
<feature type="domain" description="KARI C-terminal knotted" evidence="3">
    <location>
        <begin position="182"/>
        <end position="327"/>
    </location>
</feature>
<feature type="active site" evidence="1">
    <location>
        <position position="107"/>
    </location>
</feature>
<feature type="binding site" evidence="1">
    <location>
        <begin position="24"/>
        <end position="27"/>
    </location>
    <ligand>
        <name>NADP(+)</name>
        <dbReference type="ChEBI" id="CHEBI:58349"/>
    </ligand>
</feature>
<feature type="binding site" evidence="1">
    <location>
        <position position="47"/>
    </location>
    <ligand>
        <name>NADP(+)</name>
        <dbReference type="ChEBI" id="CHEBI:58349"/>
    </ligand>
</feature>
<feature type="binding site" evidence="1">
    <location>
        <position position="50"/>
    </location>
    <ligand>
        <name>NADP(+)</name>
        <dbReference type="ChEBI" id="CHEBI:58349"/>
    </ligand>
</feature>
<feature type="binding site" evidence="1">
    <location>
        <position position="52"/>
    </location>
    <ligand>
        <name>NADP(+)</name>
        <dbReference type="ChEBI" id="CHEBI:58349"/>
    </ligand>
</feature>
<feature type="binding site" evidence="1">
    <location>
        <begin position="82"/>
        <end position="85"/>
    </location>
    <ligand>
        <name>NADP(+)</name>
        <dbReference type="ChEBI" id="CHEBI:58349"/>
    </ligand>
</feature>
<feature type="binding site" evidence="1">
    <location>
        <position position="133"/>
    </location>
    <ligand>
        <name>NADP(+)</name>
        <dbReference type="ChEBI" id="CHEBI:58349"/>
    </ligand>
</feature>
<feature type="binding site" evidence="1">
    <location>
        <position position="190"/>
    </location>
    <ligand>
        <name>Mg(2+)</name>
        <dbReference type="ChEBI" id="CHEBI:18420"/>
        <label>1</label>
    </ligand>
</feature>
<feature type="binding site" evidence="1">
    <location>
        <position position="190"/>
    </location>
    <ligand>
        <name>Mg(2+)</name>
        <dbReference type="ChEBI" id="CHEBI:18420"/>
        <label>2</label>
    </ligand>
</feature>
<feature type="binding site" evidence="1">
    <location>
        <position position="194"/>
    </location>
    <ligand>
        <name>Mg(2+)</name>
        <dbReference type="ChEBI" id="CHEBI:18420"/>
        <label>1</label>
    </ligand>
</feature>
<feature type="binding site" evidence="1">
    <location>
        <position position="226"/>
    </location>
    <ligand>
        <name>Mg(2+)</name>
        <dbReference type="ChEBI" id="CHEBI:18420"/>
        <label>2</label>
    </ligand>
</feature>
<feature type="binding site" evidence="1">
    <location>
        <position position="230"/>
    </location>
    <ligand>
        <name>Mg(2+)</name>
        <dbReference type="ChEBI" id="CHEBI:18420"/>
        <label>2</label>
    </ligand>
</feature>
<feature type="binding site" evidence="1">
    <location>
        <position position="251"/>
    </location>
    <ligand>
        <name>substrate</name>
    </ligand>
</feature>
<comment type="function">
    <text evidence="1">Involved in the biosynthesis of branched-chain amino acids (BCAA). Catalyzes an alkyl-migration followed by a ketol-acid reduction of (S)-2-acetolactate (S2AL) to yield (R)-2,3-dihydroxy-isovalerate. In the isomerase reaction, S2AL is rearranged via a Mg-dependent methyl migration to produce 3-hydroxy-3-methyl-2-ketobutyrate (HMKB). In the reductase reaction, this 2-ketoacid undergoes a metal-dependent reduction by NADPH to yield (R)-2,3-dihydroxy-isovalerate.</text>
</comment>
<comment type="catalytic activity">
    <reaction evidence="1">
        <text>(2R)-2,3-dihydroxy-3-methylbutanoate + NADP(+) = (2S)-2-acetolactate + NADPH + H(+)</text>
        <dbReference type="Rhea" id="RHEA:22068"/>
        <dbReference type="ChEBI" id="CHEBI:15378"/>
        <dbReference type="ChEBI" id="CHEBI:49072"/>
        <dbReference type="ChEBI" id="CHEBI:57783"/>
        <dbReference type="ChEBI" id="CHEBI:58349"/>
        <dbReference type="ChEBI" id="CHEBI:58476"/>
        <dbReference type="EC" id="1.1.1.86"/>
    </reaction>
</comment>
<comment type="catalytic activity">
    <reaction evidence="1">
        <text>(2R,3R)-2,3-dihydroxy-3-methylpentanoate + NADP(+) = (S)-2-ethyl-2-hydroxy-3-oxobutanoate + NADPH + H(+)</text>
        <dbReference type="Rhea" id="RHEA:13493"/>
        <dbReference type="ChEBI" id="CHEBI:15378"/>
        <dbReference type="ChEBI" id="CHEBI:49256"/>
        <dbReference type="ChEBI" id="CHEBI:49258"/>
        <dbReference type="ChEBI" id="CHEBI:57783"/>
        <dbReference type="ChEBI" id="CHEBI:58349"/>
        <dbReference type="EC" id="1.1.1.86"/>
    </reaction>
</comment>
<comment type="cofactor">
    <cofactor evidence="1">
        <name>Mg(2+)</name>
        <dbReference type="ChEBI" id="CHEBI:18420"/>
    </cofactor>
    <text evidence="1">Binds 2 magnesium ions per subunit.</text>
</comment>
<comment type="pathway">
    <text evidence="1">Amino-acid biosynthesis; L-isoleucine biosynthesis; L-isoleucine from 2-oxobutanoate: step 2/4.</text>
</comment>
<comment type="pathway">
    <text evidence="1">Amino-acid biosynthesis; L-valine biosynthesis; L-valine from pyruvate: step 2/4.</text>
</comment>
<comment type="similarity">
    <text evidence="1">Belongs to the ketol-acid reductoisomerase family.</text>
</comment>
<organism>
    <name type="scientific">Cellvibrio japonicus (strain Ueda107)</name>
    <name type="common">Pseudomonas fluorescens subsp. cellulosa</name>
    <dbReference type="NCBI Taxonomy" id="498211"/>
    <lineage>
        <taxon>Bacteria</taxon>
        <taxon>Pseudomonadati</taxon>
        <taxon>Pseudomonadota</taxon>
        <taxon>Gammaproteobacteria</taxon>
        <taxon>Cellvibrionales</taxon>
        <taxon>Cellvibrionaceae</taxon>
        <taxon>Cellvibrio</taxon>
    </lineage>
</organism>
<reference key="1">
    <citation type="journal article" date="2008" name="J. Bacteriol.">
        <title>Insights into plant cell wall degradation from the genome sequence of the soil bacterium Cellvibrio japonicus.</title>
        <authorList>
            <person name="DeBoy R.T."/>
            <person name="Mongodin E.F."/>
            <person name="Fouts D.E."/>
            <person name="Tailford L.E."/>
            <person name="Khouri H."/>
            <person name="Emerson J.B."/>
            <person name="Mohamoud Y."/>
            <person name="Watkins K."/>
            <person name="Henrissat B."/>
            <person name="Gilbert H.J."/>
            <person name="Nelson K.E."/>
        </authorList>
    </citation>
    <scope>NUCLEOTIDE SEQUENCE [LARGE SCALE GENOMIC DNA]</scope>
    <source>
        <strain>Ueda107</strain>
    </source>
</reference>
<proteinExistence type="inferred from homology"/>
<keyword id="KW-0028">Amino-acid biosynthesis</keyword>
<keyword id="KW-0100">Branched-chain amino acid biosynthesis</keyword>
<keyword id="KW-0460">Magnesium</keyword>
<keyword id="KW-0479">Metal-binding</keyword>
<keyword id="KW-0521">NADP</keyword>
<keyword id="KW-0560">Oxidoreductase</keyword>
<keyword id="KW-1185">Reference proteome</keyword>
<evidence type="ECO:0000255" key="1">
    <source>
        <dbReference type="HAMAP-Rule" id="MF_00435"/>
    </source>
</evidence>
<evidence type="ECO:0000255" key="2">
    <source>
        <dbReference type="PROSITE-ProRule" id="PRU01197"/>
    </source>
</evidence>
<evidence type="ECO:0000255" key="3">
    <source>
        <dbReference type="PROSITE-ProRule" id="PRU01198"/>
    </source>
</evidence>
<protein>
    <recommendedName>
        <fullName evidence="1">Ketol-acid reductoisomerase (NADP(+))</fullName>
        <shortName evidence="1">KARI</shortName>
        <ecNumber evidence="1">1.1.1.86</ecNumber>
    </recommendedName>
    <alternativeName>
        <fullName evidence="1">Acetohydroxy-acid isomeroreductase</fullName>
        <shortName evidence="1">AHIR</shortName>
    </alternativeName>
    <alternativeName>
        <fullName evidence="1">Alpha-keto-beta-hydroxylacyl reductoisomerase</fullName>
    </alternativeName>
    <alternativeName>
        <fullName evidence="1">Ketol-acid reductoisomerase type 1</fullName>
    </alternativeName>
    <alternativeName>
        <fullName evidence="1">Ketol-acid reductoisomerase type I</fullName>
    </alternativeName>
</protein>
<accession>B3PK17</accession>
<gene>
    <name evidence="1" type="primary">ilvC</name>
    <name type="ordered locus">CJA_0668</name>
</gene>